<name>PR15A_HUMAN</name>
<gene>
    <name type="primary">PPP1R15A</name>
    <name type="synonym">GADD34</name>
</gene>
<sequence>MAPGQAPHQATPWRDAHPFFLLSPVMGLLSRAWSRLRGLGPLEPWLVEAVKGAALVEAGLEGEARTPLAIPHTPWGRRPEEEAEDSGGPGEDRETLGLKTSSSLPEAWGLLDDDDGMYGEREATSVPRGQGSQFADGQRAPLSPSLLIRTLQGSDKNPGEEKAEEEGVAEEEGVNKFSYPPSHRECCPAVEEEDDEEAVKKEAHRTSTSALSPGSKPSTWVSCPGEEENQATEDKRTERSKGARKTSVSPRSSGSDPRSWEYRSGEASEEKEEKAHKETGKGEAAPGPQSSAPAQRPQLKSWWCQPSDEEEGEVKALGAAEKDGEAECPPCIPPPSAFLKAWVYWPGEDTEEEEDEEEDEDSDSGSDEEEGEAEASSSTPATGVFLKSWVYQPGEDTEEEEDEDSDTGSAEDEREAETSASTPPASAFLKAWVYRPGEDTEEEEDEDVDSEDKEDDSEAALGEAESDPHPSHPDQRAHFRGWGYRPGKETEEEEAAEDWGEAEPCPFRVAIYVPGEKPPPPWAPPRLPLRLQRRLKRPETPTHDPDPETPLKARKVRFSEKVTVHFLAVWAGPAQAARQGPWEQLARDRSRFARRITQAQEELSPCLTPAARARAWARLRNPPLAPIPALTQTLPSSSVPSSPVQTTPLSQAVATPSRSSAAAAAALDLSGRRG</sequence>
<keyword id="KW-0002">3D-structure</keyword>
<keyword id="KW-0025">Alternative splicing</keyword>
<keyword id="KW-0053">Apoptosis</keyword>
<keyword id="KW-0256">Endoplasmic reticulum</keyword>
<keyword id="KW-0472">Membrane</keyword>
<keyword id="KW-0496">Mitochondrion</keyword>
<keyword id="KW-1000">Mitochondrion outer membrane</keyword>
<keyword id="KW-0597">Phosphoprotein</keyword>
<keyword id="KW-1267">Proteomics identification</keyword>
<keyword id="KW-1185">Reference proteome</keyword>
<keyword id="KW-0677">Repeat</keyword>
<keyword id="KW-0346">Stress response</keyword>
<keyword id="KW-0810">Translation regulation</keyword>
<keyword id="KW-0832">Ubl conjugation</keyword>
<reference key="1">
    <citation type="journal article" date="1997" name="J. Biol. Chem.">
        <title>Mammalian GADD34, an apoptosis- and DNA damage-inducible gene.</title>
        <authorList>
            <person name="Hollander M.C."/>
            <person name="Zhan Q."/>
            <person name="Bae I."/>
            <person name="Fornace A.J. Jr."/>
        </authorList>
    </citation>
    <scope>NUCLEOTIDE SEQUENCE [MRNA] (ISOFORM 1)</scope>
    <scope>INDUCTION</scope>
</reference>
<reference key="2">
    <citation type="submission" date="2004-06" db="EMBL/GenBank/DDBJ databases">
        <title>Cloning of human full open reading frames in Gateway(TM) system entry vector (pDONR201).</title>
        <authorList>
            <person name="Ebert L."/>
            <person name="Schick M."/>
            <person name="Neubert P."/>
            <person name="Schatten R."/>
            <person name="Henze S."/>
            <person name="Korn B."/>
        </authorList>
    </citation>
    <scope>NUCLEOTIDE SEQUENCE [LARGE SCALE MRNA] (ISOFORM 1)</scope>
    <scope>VARIANT THR-32</scope>
</reference>
<reference key="3">
    <citation type="journal article" date="2004" name="Nat. Genet.">
        <title>Complete sequencing and characterization of 21,243 full-length human cDNAs.</title>
        <authorList>
            <person name="Ota T."/>
            <person name="Suzuki Y."/>
            <person name="Nishikawa T."/>
            <person name="Otsuki T."/>
            <person name="Sugiyama T."/>
            <person name="Irie R."/>
            <person name="Wakamatsu A."/>
            <person name="Hayashi K."/>
            <person name="Sato H."/>
            <person name="Nagai K."/>
            <person name="Kimura K."/>
            <person name="Makita H."/>
            <person name="Sekine M."/>
            <person name="Obayashi M."/>
            <person name="Nishi T."/>
            <person name="Shibahara T."/>
            <person name="Tanaka T."/>
            <person name="Ishii S."/>
            <person name="Yamamoto J."/>
            <person name="Saito K."/>
            <person name="Kawai Y."/>
            <person name="Isono Y."/>
            <person name="Nakamura Y."/>
            <person name="Nagahari K."/>
            <person name="Murakami K."/>
            <person name="Yasuda T."/>
            <person name="Iwayanagi T."/>
            <person name="Wagatsuma M."/>
            <person name="Shiratori A."/>
            <person name="Sudo H."/>
            <person name="Hosoiri T."/>
            <person name="Kaku Y."/>
            <person name="Kodaira H."/>
            <person name="Kondo H."/>
            <person name="Sugawara M."/>
            <person name="Takahashi M."/>
            <person name="Kanda K."/>
            <person name="Yokoi T."/>
            <person name="Furuya T."/>
            <person name="Kikkawa E."/>
            <person name="Omura Y."/>
            <person name="Abe K."/>
            <person name="Kamihara K."/>
            <person name="Katsuta N."/>
            <person name="Sato K."/>
            <person name="Tanikawa M."/>
            <person name="Yamazaki M."/>
            <person name="Ninomiya K."/>
            <person name="Ishibashi T."/>
            <person name="Yamashita H."/>
            <person name="Murakawa K."/>
            <person name="Fujimori K."/>
            <person name="Tanai H."/>
            <person name="Kimata M."/>
            <person name="Watanabe M."/>
            <person name="Hiraoka S."/>
            <person name="Chiba Y."/>
            <person name="Ishida S."/>
            <person name="Ono Y."/>
            <person name="Takiguchi S."/>
            <person name="Watanabe S."/>
            <person name="Yosida M."/>
            <person name="Hotuta T."/>
            <person name="Kusano J."/>
            <person name="Kanehori K."/>
            <person name="Takahashi-Fujii A."/>
            <person name="Hara H."/>
            <person name="Tanase T.-O."/>
            <person name="Nomura Y."/>
            <person name="Togiya S."/>
            <person name="Komai F."/>
            <person name="Hara R."/>
            <person name="Takeuchi K."/>
            <person name="Arita M."/>
            <person name="Imose N."/>
            <person name="Musashino K."/>
            <person name="Yuuki H."/>
            <person name="Oshima A."/>
            <person name="Sasaki N."/>
            <person name="Aotsuka S."/>
            <person name="Yoshikawa Y."/>
            <person name="Matsunawa H."/>
            <person name="Ichihara T."/>
            <person name="Shiohata N."/>
            <person name="Sano S."/>
            <person name="Moriya S."/>
            <person name="Momiyama H."/>
            <person name="Satoh N."/>
            <person name="Takami S."/>
            <person name="Terashima Y."/>
            <person name="Suzuki O."/>
            <person name="Nakagawa S."/>
            <person name="Senoh A."/>
            <person name="Mizoguchi H."/>
            <person name="Goto Y."/>
            <person name="Shimizu F."/>
            <person name="Wakebe H."/>
            <person name="Hishigaki H."/>
            <person name="Watanabe T."/>
            <person name="Sugiyama A."/>
            <person name="Takemoto M."/>
            <person name="Kawakami B."/>
            <person name="Yamazaki M."/>
            <person name="Watanabe K."/>
            <person name="Kumagai A."/>
            <person name="Itakura S."/>
            <person name="Fukuzumi Y."/>
            <person name="Fujimori Y."/>
            <person name="Komiyama M."/>
            <person name="Tashiro H."/>
            <person name="Tanigami A."/>
            <person name="Fujiwara T."/>
            <person name="Ono T."/>
            <person name="Yamada K."/>
            <person name="Fujii Y."/>
            <person name="Ozaki K."/>
            <person name="Hirao M."/>
            <person name="Ohmori Y."/>
            <person name="Kawabata A."/>
            <person name="Hikiji T."/>
            <person name="Kobatake N."/>
            <person name="Inagaki H."/>
            <person name="Ikema Y."/>
            <person name="Okamoto S."/>
            <person name="Okitani R."/>
            <person name="Kawakami T."/>
            <person name="Noguchi S."/>
            <person name="Itoh T."/>
            <person name="Shigeta K."/>
            <person name="Senba T."/>
            <person name="Matsumura K."/>
            <person name="Nakajima Y."/>
            <person name="Mizuno T."/>
            <person name="Morinaga M."/>
            <person name="Sasaki M."/>
            <person name="Togashi T."/>
            <person name="Oyama M."/>
            <person name="Hata H."/>
            <person name="Watanabe M."/>
            <person name="Komatsu T."/>
            <person name="Mizushima-Sugano J."/>
            <person name="Satoh T."/>
            <person name="Shirai Y."/>
            <person name="Takahashi Y."/>
            <person name="Nakagawa K."/>
            <person name="Okumura K."/>
            <person name="Nagase T."/>
            <person name="Nomura N."/>
            <person name="Kikuchi H."/>
            <person name="Masuho Y."/>
            <person name="Yamashita R."/>
            <person name="Nakai K."/>
            <person name="Yada T."/>
            <person name="Nakamura Y."/>
            <person name="Ohara O."/>
            <person name="Isogai T."/>
            <person name="Sugano S."/>
        </authorList>
    </citation>
    <scope>NUCLEOTIDE SEQUENCE [LARGE SCALE MRNA] (ISOFORMS 1 AND 2)</scope>
    <scope>VARIANTS GLU-277; SER-312; PRO-316; SER-476 AND ALA-597</scope>
    <source>
        <tissue>Umbilical cord blood</tissue>
    </source>
</reference>
<reference key="4">
    <citation type="submission" date="2005-07" db="EMBL/GenBank/DDBJ databases">
        <authorList>
            <person name="Mural R.J."/>
            <person name="Istrail S."/>
            <person name="Sutton G.G."/>
            <person name="Florea L."/>
            <person name="Halpern A.L."/>
            <person name="Mobarry C.M."/>
            <person name="Lippert R."/>
            <person name="Walenz B."/>
            <person name="Shatkay H."/>
            <person name="Dew I."/>
            <person name="Miller J.R."/>
            <person name="Flanigan M.J."/>
            <person name="Edwards N.J."/>
            <person name="Bolanos R."/>
            <person name="Fasulo D."/>
            <person name="Halldorsson B.V."/>
            <person name="Hannenhalli S."/>
            <person name="Turner R."/>
            <person name="Yooseph S."/>
            <person name="Lu F."/>
            <person name="Nusskern D.R."/>
            <person name="Shue B.C."/>
            <person name="Zheng X.H."/>
            <person name="Zhong F."/>
            <person name="Delcher A.L."/>
            <person name="Huson D.H."/>
            <person name="Kravitz S.A."/>
            <person name="Mouchard L."/>
            <person name="Reinert K."/>
            <person name="Remington K.A."/>
            <person name="Clark A.G."/>
            <person name="Waterman M.S."/>
            <person name="Eichler E.E."/>
            <person name="Adams M.D."/>
            <person name="Hunkapiller M.W."/>
            <person name="Myers E.W."/>
            <person name="Venter J.C."/>
        </authorList>
    </citation>
    <scope>NUCLEOTIDE SEQUENCE [LARGE SCALE GENOMIC DNA]</scope>
</reference>
<reference key="5">
    <citation type="journal article" date="2004" name="Genome Res.">
        <title>The status, quality, and expansion of the NIH full-length cDNA project: the Mammalian Gene Collection (MGC).</title>
        <authorList>
            <consortium name="The MGC Project Team"/>
        </authorList>
    </citation>
    <scope>NUCLEOTIDE SEQUENCE [LARGE SCALE MRNA] (ISOFORM 1)</scope>
    <source>
        <tissue>Brain</tissue>
    </source>
</reference>
<reference key="6">
    <citation type="journal article" date="1994" name="Mol. Cell. Biol.">
        <title>The gadd and MyD genes define a novel set of mammalian genes encoding acidic proteins that synergistically suppress cell growth.</title>
        <authorList>
            <person name="Zhan Q."/>
            <person name="Lord K.A."/>
            <person name="Alamo I. Jr."/>
            <person name="Hollander M.C."/>
            <person name="Carrier F."/>
            <person name="Ron D."/>
            <person name="Kohn K.W."/>
            <person name="Hoffman B."/>
            <person name="Liebermann D.A."/>
            <person name="Fornace A.J. Jr."/>
        </authorList>
    </citation>
    <scope>FUNCTION</scope>
</reference>
<reference key="7">
    <citation type="journal article" date="1999" name="Mol. Cell. Biol.">
        <title>Leukemic HRX fusion proteins inhibit GADD34-induced apoptosis and associate with the GADD34 and hSNF5/INI1 proteins.</title>
        <authorList>
            <person name="Adler H.T."/>
            <person name="Chinery R."/>
            <person name="Wu D.Y."/>
            <person name="Kussick S.J."/>
            <person name="Payne J.M."/>
            <person name="Fornace A.J. Jr."/>
            <person name="Tkachuk D.C."/>
        </authorList>
    </citation>
    <scope>INTERACTION WITH KMT2A/MLL1 AND SMARCB1</scope>
    <scope>INDUCTION</scope>
</reference>
<reference key="8">
    <citation type="journal article" date="2001" name="Proc. Natl. Acad. Sci. U.S.A.">
        <title>Interaction between growth arrest-DNA damage protein 34 and Src kinase Lyn negatively regulates genotoxic apoptosis.</title>
        <authorList>
            <person name="Grishin A.V."/>
            <person name="Azhipa O."/>
            <person name="Semenov I."/>
            <person name="Corey S.J."/>
        </authorList>
    </citation>
    <scope>INTERACTION WITH LYN</scope>
    <scope>PHOSPHORYLATION</scope>
</reference>
<reference key="9">
    <citation type="journal article" date="2001" name="Mol. Cell. Biol.">
        <title>Growth arrest and DNA damage-inducible protein GADD34 assembles a novel signaling complex containing protein phosphatase 1 and inhibitor 1.</title>
        <authorList>
            <person name="Connor J.H."/>
            <person name="Weiser D.C."/>
            <person name="Li S."/>
            <person name="Hallenbeck J.M."/>
            <person name="Shenolikar S."/>
        </authorList>
    </citation>
    <scope>INTERACTION WITH PP1 AND PPP1R1A</scope>
    <scope>FUNCTION</scope>
</reference>
<reference key="10">
    <citation type="journal article" date="2002" name="J. Biol. Chem.">
        <title>The human SNF5/INI1 protein facilitates the function of the growth arrest and DNA damage-inducible protein (GADD34) and modulates GADD34-bound protein phosphatase-1 activity.</title>
        <authorList>
            <person name="Wu D.Y."/>
            <person name="Tkachuck D.C."/>
            <person name="Roberson R.S."/>
            <person name="Schubach W.H."/>
        </authorList>
    </citation>
    <scope>INTERACTION WITH SMARCB1 AND PPP1R1A</scope>
    <scope>MUTAGENESIS OF 555-LYS--PHE-558</scope>
</reference>
<reference key="11">
    <citation type="journal article" date="2002" name="Proc. Natl. Acad. Sci. U.S.A.">
        <title>mda-7 (IL-24) Mediates selective apoptosis in human melanoma cells by inducing the coordinated overexpression of the GADD family of genes by means of p38 MAPK.</title>
        <authorList>
            <person name="Sarkar D."/>
            <person name="Su Z.-Z."/>
            <person name="Lebedeva I.V."/>
            <person name="Sauane M."/>
            <person name="Gopalkrishnan R.V."/>
            <person name="Valerie K."/>
            <person name="Dent P."/>
            <person name="Fisher P.B."/>
        </authorList>
    </citation>
    <scope>INDUCTION</scope>
</reference>
<reference key="12">
    <citation type="journal article" date="2003" name="J. Cell. Biochem.">
        <title>GADD34 induces p53 phosphorylation and p21/WAF1 transcription.</title>
        <authorList>
            <person name="Yagi A."/>
            <person name="Hasegawa Y."/>
            <person name="Xiao H."/>
            <person name="Haneda M."/>
            <person name="Kojima E."/>
            <person name="Nishikimi A."/>
            <person name="Hasegawa T."/>
            <person name="Shimokata K."/>
            <person name="Isobe K."/>
        </authorList>
    </citation>
    <scope>FUNCTION</scope>
</reference>
<reference key="13">
    <citation type="journal article" date="2003" name="Mol. Cell. Biol.">
        <title>Growth arrest and DNA damage-inducible protein GADD34 targets protein phosphatase 1 alpha to the endoplasmic reticulum and promotes dephosphorylation of the alpha subunit of eukaryotic translation initiation factor 2.</title>
        <authorList>
            <person name="Brush M.H."/>
            <person name="Weiser D.C."/>
            <person name="Shenolikar S."/>
        </authorList>
    </citation>
    <scope>FUNCTION</scope>
    <scope>MUTAGENESIS OF 556-VAL--SER-558; ARG-612; ARG-614 AND ARG-618</scope>
    <scope>SUBCELLULAR LOCATION</scope>
</reference>
<reference key="14">
    <citation type="journal article" date="2003" name="Mol. Cell. Biol.">
        <title>Human BAG-1 proteins bind to the cellular stress response protein GADD34 and interfere with GADD34 functions.</title>
        <authorList>
            <person name="Hung W.J."/>
            <person name="Roberson R.S."/>
            <person name="Taft J."/>
            <person name="Wu D.Y."/>
        </authorList>
    </citation>
    <scope>INTERACTION WITH BAG1</scope>
</reference>
<reference key="15">
    <citation type="journal article" date="2004" name="J. Cell Biol.">
        <title>GADD34-PP1c recruited by Smad7 dephosphorylates TGFbeta type I receptor.</title>
        <authorList>
            <person name="Shi W."/>
            <person name="Sun C."/>
            <person name="He B."/>
            <person name="Xiong W."/>
            <person name="Shi X."/>
            <person name="Yao D."/>
            <person name="Cao X."/>
        </authorList>
    </citation>
    <scope>FUNCTION</scope>
    <scope>INTERACTION WITH SMAD7</scope>
</reference>
<reference key="16">
    <citation type="journal article" date="2005" name="Science">
        <title>A selective inhibitor of eIF2alpha dephosphorylation protects cells from ER stress.</title>
        <authorList>
            <person name="Boyce M."/>
            <person name="Bryant K.F."/>
            <person name="Jousse C."/>
            <person name="Long K."/>
            <person name="Harding H.P."/>
            <person name="Scheuner D."/>
            <person name="Kaufman R.J."/>
            <person name="Ma D."/>
            <person name="Coen D.M."/>
            <person name="Ron D."/>
            <person name="Yuan J."/>
        </authorList>
    </citation>
    <scope>INTERACTION WITH PPP1CA</scope>
</reference>
<reference key="17">
    <citation type="journal article" date="2009" name="J. Biol. Chem.">
        <title>An upstream open reading frame regulates translation of GADD34 during cellular stresses that induce eIF2alpha phosphorylation.</title>
        <authorList>
            <person name="Lee Y.Y."/>
            <person name="Cevallos R.C."/>
            <person name="Jan E."/>
        </authorList>
    </citation>
    <scope>INDUCTION</scope>
</reference>
<reference key="18">
    <citation type="journal article" date="2011" name="J. Biol. Chem.">
        <title>Association with endoplasmic reticulum promotes proteasomal degradation of GADD34 protein.</title>
        <authorList>
            <person name="Zhou W."/>
            <person name="Brush M.H."/>
            <person name="Choy M.S."/>
            <person name="Shenolikar S."/>
        </authorList>
    </citation>
    <scope>SUBCELLULAR LOCATION</scope>
    <scope>TOPOLOGY</scope>
    <scope>INTRAMEMBRANE REGION</scope>
    <scope>MUTAGENESIS OF VAL-25 AND LEU-29</scope>
</reference>
<reference key="19">
    <citation type="journal article" date="2013" name="J. Biol. Chem.">
        <title>Phosphorylation at tyrosine 262 promotes GADD34 protein turnover.</title>
        <authorList>
            <person name="Zhou W."/>
            <person name="Jeyaraman K."/>
            <person name="Yusoff P."/>
            <person name="Shenolikar S."/>
        </authorList>
    </citation>
    <scope>PHOSPHORYLATION AT TYR-262; TYR-391; TYR-434 AND TYR-512</scope>
    <scope>UBIQUITINATION</scope>
    <scope>MUTAGENESIS OF TYR-262</scope>
</reference>
<reference key="20">
    <citation type="journal article" date="2013" name="J. Proteome Res.">
        <title>Toward a comprehensive characterization of a human cancer cell phosphoproteome.</title>
        <authorList>
            <person name="Zhou H."/>
            <person name="Di Palma S."/>
            <person name="Preisinger C."/>
            <person name="Peng M."/>
            <person name="Polat A.N."/>
            <person name="Heck A.J."/>
            <person name="Mohammed S."/>
        </authorList>
    </citation>
    <scope>PHOSPHORYLATION [LARGE SCALE ANALYSIS] AT SER-143</scope>
    <scope>IDENTIFICATION BY MASS SPECTROMETRY [LARGE SCALE ANALYSIS]</scope>
    <source>
        <tissue>Erythroleukemia</tissue>
    </source>
</reference>
<reference key="21">
    <citation type="journal article" date="2016" name="EMBO J.">
        <title>Targeted redox inhibition of protein phosphatase 1 by Nox4 regulates eIF2alpha-mediated stress signaling.</title>
        <authorList>
            <person name="Santos C.X."/>
            <person name="Hafstad A.D."/>
            <person name="Beretta M."/>
            <person name="Zhang M."/>
            <person name="Molenaar C."/>
            <person name="Kopec J."/>
            <person name="Fotinou D."/>
            <person name="Murray T.V."/>
            <person name="Cobb A.M."/>
            <person name="Martin D."/>
            <person name="Zeh Silva M."/>
            <person name="Anilkumar N."/>
            <person name="Schroeder K."/>
            <person name="Shanahan C.M."/>
            <person name="Brewer A.C."/>
            <person name="Brandes R.P."/>
            <person name="Blanc E."/>
            <person name="Parsons M."/>
            <person name="Belousov V."/>
            <person name="Cammack R."/>
            <person name="Hider R.C."/>
            <person name="Steiner R.A."/>
            <person name="Shah A.M."/>
        </authorList>
    </citation>
    <scope>FUNCTION</scope>
    <scope>INTERACTION WITH NOX4</scope>
    <scope>SUBCELLULAR LOCATION</scope>
</reference>
<reference key="22">
    <citation type="journal article" date="2020" name="Virology">
        <title>GADD34 attenuates HIV-1 replication by viral 5'-UTR TAR RNA-mediated translational inhibition.</title>
        <authorList>
            <person name="Ishaq M."/>
            <person name="Marshall H."/>
            <person name="Natarajan V."/>
        </authorList>
    </citation>
    <scope>FUNCTION</scope>
    <scope>INDUCTION BY HIV-1 VIRUS</scope>
</reference>
<reference key="23">
    <citation type="journal article" date="2020" name="Sci. Adv.">
        <title>GADD34 is a modulator of autophagy during starvation.</title>
        <authorList>
            <person name="Gambardella G."/>
            <person name="Staiano L."/>
            <person name="Moretti M.N."/>
            <person name="De Cegli R."/>
            <person name="Fagnocchi L."/>
            <person name="Di Tullio G."/>
            <person name="Polletti S."/>
            <person name="Braccia C."/>
            <person name="Armirotti A."/>
            <person name="Zippo A."/>
            <person name="Ballabio A."/>
            <person name="De Matteis M.A."/>
            <person name="di Bernardo D."/>
        </authorList>
    </citation>
    <scope>FUNCTION</scope>
</reference>
<reference key="24">
    <citation type="journal article" date="2022" name="Microbiol. Spectr.">
        <title>Enterovirus 71 Activates GADD34 via Precursor 3CD to Promote IRES-Mediated Viral Translation.</title>
        <authorList>
            <person name="Li H."/>
            <person name="Li W."/>
            <person name="Zhang S."/>
            <person name="Qiu M."/>
            <person name="Li Z."/>
            <person name="Lin Y."/>
            <person name="Tan J."/>
            <person name="Qiao W."/>
        </authorList>
    </citation>
    <scope>FUNCTION (MICROBIAL INFECTION)</scope>
    <scope>INDUCTION BY ENTEROVIRUS 71</scope>
    <scope>INTERACTION WITH ENTEROVIRUS 71 PROTEIN 3CD (MICROBIAL INFECTION)</scope>
    <scope>SUBCELLULAR LOCATION</scope>
</reference>
<reference evidence="27" key="25">
    <citation type="journal article" date="2015" name="Cell Rep.">
        <title>Structural and Functional Analysis of the GADD34:PP1 eIF2alpha Phosphatase.</title>
        <authorList>
            <person name="Choy M.S."/>
            <person name="Yusoff P."/>
            <person name="Lee I.C."/>
            <person name="Newton J.C."/>
            <person name="Goh C.W."/>
            <person name="Page R."/>
            <person name="Shenolikar S."/>
            <person name="Peti W."/>
        </authorList>
    </citation>
    <scope>X-RAY CRYSTALLOGRAPHY (2.29 ANGSTROMS) OF 552-591 IN COMPLEX WITH PPP1CA AND EIF2S1</scope>
    <scope>FUNCTION</scope>
</reference>
<dbReference type="EMBL" id="U83981">
    <property type="protein sequence ID" value="AAC25631.1"/>
    <property type="molecule type" value="mRNA"/>
</dbReference>
<dbReference type="EMBL" id="CR457259">
    <property type="protein sequence ID" value="CAG33540.1"/>
    <property type="molecule type" value="mRNA"/>
</dbReference>
<dbReference type="EMBL" id="AK001361">
    <property type="protein sequence ID" value="BAA91649.1"/>
    <property type="molecule type" value="mRNA"/>
</dbReference>
<dbReference type="EMBL" id="AK296668">
    <property type="protein sequence ID" value="BAG59265.1"/>
    <property type="molecule type" value="mRNA"/>
</dbReference>
<dbReference type="EMBL" id="CH471177">
    <property type="protein sequence ID" value="EAW52409.1"/>
    <property type="molecule type" value="Genomic_DNA"/>
</dbReference>
<dbReference type="EMBL" id="BC003067">
    <property type="protein sequence ID" value="AAH03067.1"/>
    <property type="molecule type" value="mRNA"/>
</dbReference>
<dbReference type="CCDS" id="CCDS12738.1">
    <molecule id="O75807-1"/>
</dbReference>
<dbReference type="RefSeq" id="NP_055145.3">
    <molecule id="O75807-1"/>
    <property type="nucleotide sequence ID" value="NM_014330.3"/>
</dbReference>
<dbReference type="PDB" id="4XPN">
    <property type="method" value="X-ray"/>
    <property type="resolution" value="2.29 A"/>
    <property type="chains" value="B/D=552-591"/>
</dbReference>
<dbReference type="PDB" id="7NXV">
    <property type="method" value="X-ray"/>
    <property type="resolution" value="2.55 A"/>
    <property type="chains" value="C/E=582-621"/>
</dbReference>
<dbReference type="PDB" id="7NZM">
    <property type="method" value="EM"/>
    <property type="resolution" value="3.96 A"/>
    <property type="chains" value="C=553-624"/>
</dbReference>
<dbReference type="PDB" id="8QZZ">
    <property type="method" value="X-ray"/>
    <property type="resolution" value="3.35 A"/>
    <property type="chains" value="C=420-452"/>
</dbReference>
<dbReference type="PDBsum" id="4XPN"/>
<dbReference type="PDBsum" id="7NXV"/>
<dbReference type="PDBsum" id="7NZM"/>
<dbReference type="PDBsum" id="8QZZ"/>
<dbReference type="SMR" id="O75807"/>
<dbReference type="BioGRID" id="117172">
    <property type="interactions" value="42"/>
</dbReference>
<dbReference type="FunCoup" id="O75807">
    <property type="interactions" value="267"/>
</dbReference>
<dbReference type="IntAct" id="O75807">
    <property type="interactions" value="205"/>
</dbReference>
<dbReference type="MINT" id="O75807"/>
<dbReference type="STRING" id="9606.ENSP00000200453"/>
<dbReference type="BindingDB" id="O75807"/>
<dbReference type="ChEMBL" id="CHEMBL4630805"/>
<dbReference type="GlyGen" id="O75807">
    <property type="glycosylation" value="2 sites, 1 O-linked glycan (1 site)"/>
</dbReference>
<dbReference type="iPTMnet" id="O75807"/>
<dbReference type="PhosphoSitePlus" id="O75807"/>
<dbReference type="BioMuta" id="PPP1R15A"/>
<dbReference type="jPOST" id="O75807"/>
<dbReference type="MassIVE" id="O75807"/>
<dbReference type="PaxDb" id="9606-ENSP00000200453"/>
<dbReference type="PeptideAtlas" id="O75807"/>
<dbReference type="ProteomicsDB" id="50202">
    <molecule id="O75807-1"/>
</dbReference>
<dbReference type="Antibodypedia" id="4340">
    <property type="antibodies" value="312 antibodies from 34 providers"/>
</dbReference>
<dbReference type="DNASU" id="23645"/>
<dbReference type="Ensembl" id="ENST00000200453.6">
    <molecule id="O75807-1"/>
    <property type="protein sequence ID" value="ENSP00000200453.4"/>
    <property type="gene ID" value="ENSG00000087074.9"/>
</dbReference>
<dbReference type="GeneID" id="23645"/>
<dbReference type="KEGG" id="hsa:23645"/>
<dbReference type="MANE-Select" id="ENST00000200453.6">
    <property type="protein sequence ID" value="ENSP00000200453.4"/>
    <property type="RefSeq nucleotide sequence ID" value="NM_014330.5"/>
    <property type="RefSeq protein sequence ID" value="NP_055145.3"/>
</dbReference>
<dbReference type="UCSC" id="uc002pky.5">
    <molecule id="O75807-1"/>
    <property type="organism name" value="human"/>
</dbReference>
<dbReference type="AGR" id="HGNC:14375"/>
<dbReference type="CTD" id="23645"/>
<dbReference type="DisGeNET" id="23645"/>
<dbReference type="GeneCards" id="PPP1R15A"/>
<dbReference type="HGNC" id="HGNC:14375">
    <property type="gene designation" value="PPP1R15A"/>
</dbReference>
<dbReference type="HPA" id="ENSG00000087074">
    <property type="expression patterns" value="Tissue enhanced (bone)"/>
</dbReference>
<dbReference type="MIM" id="611048">
    <property type="type" value="gene"/>
</dbReference>
<dbReference type="neXtProt" id="NX_O75807"/>
<dbReference type="OpenTargets" id="ENSG00000087074"/>
<dbReference type="PharmGKB" id="PA33632"/>
<dbReference type="VEuPathDB" id="HostDB:ENSG00000087074"/>
<dbReference type="eggNOG" id="ENOG502S745">
    <property type="taxonomic scope" value="Eukaryota"/>
</dbReference>
<dbReference type="GeneTree" id="ENSGT00940000154404"/>
<dbReference type="HOGENOM" id="CLU_028812_0_0_1"/>
<dbReference type="InParanoid" id="O75807"/>
<dbReference type="OMA" id="VRAWVYR"/>
<dbReference type="OrthoDB" id="5976067at2759"/>
<dbReference type="PAN-GO" id="O75807">
    <property type="GO annotations" value="5 GO annotations based on evolutionary models"/>
</dbReference>
<dbReference type="PhylomeDB" id="O75807"/>
<dbReference type="TreeFam" id="TF105547"/>
<dbReference type="PathwayCommons" id="O75807"/>
<dbReference type="Reactome" id="R-HSA-2173788">
    <property type="pathway name" value="Downregulation of TGF-beta receptor signaling"/>
</dbReference>
<dbReference type="Reactome" id="R-HSA-9648895">
    <property type="pathway name" value="Response of EIF2AK1 (HRI) to heme deficiency"/>
</dbReference>
<dbReference type="SignaLink" id="O75807"/>
<dbReference type="SIGNOR" id="O75807"/>
<dbReference type="BioGRID-ORCS" id="23645">
    <property type="hits" value="28 hits in 1160 CRISPR screens"/>
</dbReference>
<dbReference type="ChiTaRS" id="PPP1R15A">
    <property type="organism name" value="human"/>
</dbReference>
<dbReference type="GeneWiki" id="PPP1R15A"/>
<dbReference type="GenomeRNAi" id="23645"/>
<dbReference type="Pharos" id="O75807">
    <property type="development level" value="Tchem"/>
</dbReference>
<dbReference type="PRO" id="PR:O75807"/>
<dbReference type="Proteomes" id="UP000005640">
    <property type="component" value="Chromosome 19"/>
</dbReference>
<dbReference type="RNAct" id="O75807">
    <property type="molecule type" value="protein"/>
</dbReference>
<dbReference type="Bgee" id="ENSG00000087074">
    <property type="expression patterns" value="Expressed in mucosa of stomach and 195 other cell types or tissues"/>
</dbReference>
<dbReference type="ExpressionAtlas" id="O75807">
    <property type="expression patterns" value="baseline and differential"/>
</dbReference>
<dbReference type="GO" id="GO:0005737">
    <property type="term" value="C:cytoplasm"/>
    <property type="evidence" value="ECO:0000314"/>
    <property type="project" value="ParkinsonsUK-UCL"/>
</dbReference>
<dbReference type="GO" id="GO:0005829">
    <property type="term" value="C:cytosol"/>
    <property type="evidence" value="ECO:0000304"/>
    <property type="project" value="Reactome"/>
</dbReference>
<dbReference type="GO" id="GO:0005783">
    <property type="term" value="C:endoplasmic reticulum"/>
    <property type="evidence" value="ECO:0000314"/>
    <property type="project" value="ParkinsonsUK-UCL"/>
</dbReference>
<dbReference type="GO" id="GO:0005789">
    <property type="term" value="C:endoplasmic reticulum membrane"/>
    <property type="evidence" value="ECO:0000303"/>
    <property type="project" value="ParkinsonsUK-UCL"/>
</dbReference>
<dbReference type="GO" id="GO:0005794">
    <property type="term" value="C:Golgi apparatus"/>
    <property type="evidence" value="ECO:0000314"/>
    <property type="project" value="ParkinsonsUK-UCL"/>
</dbReference>
<dbReference type="GO" id="GO:0016020">
    <property type="term" value="C:membrane"/>
    <property type="evidence" value="ECO:0000314"/>
    <property type="project" value="ParkinsonsUK-UCL"/>
</dbReference>
<dbReference type="GO" id="GO:0005741">
    <property type="term" value="C:mitochondrial outer membrane"/>
    <property type="evidence" value="ECO:0007669"/>
    <property type="project" value="UniProtKB-SubCell"/>
</dbReference>
<dbReference type="GO" id="GO:0005739">
    <property type="term" value="C:mitochondrion"/>
    <property type="evidence" value="ECO:0000314"/>
    <property type="project" value="ParkinsonsUK-UCL"/>
</dbReference>
<dbReference type="GO" id="GO:0000164">
    <property type="term" value="C:protein phosphatase type 1 complex"/>
    <property type="evidence" value="ECO:0000314"/>
    <property type="project" value="ParkinsonsUK-UCL"/>
</dbReference>
<dbReference type="GO" id="GO:0071074">
    <property type="term" value="F:eukaryotic initiation factor eIF2 binding"/>
    <property type="evidence" value="ECO:0000353"/>
    <property type="project" value="DisProt"/>
</dbReference>
<dbReference type="GO" id="GO:0019901">
    <property type="term" value="F:protein kinase binding"/>
    <property type="evidence" value="ECO:0000353"/>
    <property type="project" value="UniProtKB"/>
</dbReference>
<dbReference type="GO" id="GO:0008157">
    <property type="term" value="F:protein phosphatase 1 binding"/>
    <property type="evidence" value="ECO:0000314"/>
    <property type="project" value="ParkinsonsUK-UCL"/>
</dbReference>
<dbReference type="GO" id="GO:0072542">
    <property type="term" value="F:protein phosphatase activator activity"/>
    <property type="evidence" value="ECO:0000314"/>
    <property type="project" value="ParkinsonsUK-UCL"/>
</dbReference>
<dbReference type="GO" id="GO:0019888">
    <property type="term" value="F:protein phosphatase regulator activity"/>
    <property type="evidence" value="ECO:0000314"/>
    <property type="project" value="ParkinsonsUK-UCL"/>
</dbReference>
<dbReference type="GO" id="GO:0006915">
    <property type="term" value="P:apoptotic process"/>
    <property type="evidence" value="ECO:0000304"/>
    <property type="project" value="ProtInc"/>
</dbReference>
<dbReference type="GO" id="GO:0006974">
    <property type="term" value="P:DNA damage response"/>
    <property type="evidence" value="ECO:0000304"/>
    <property type="project" value="ProtInc"/>
</dbReference>
<dbReference type="GO" id="GO:0070059">
    <property type="term" value="P:intrinsic apoptotic signaling pathway in response to endoplasmic reticulum stress"/>
    <property type="evidence" value="ECO:0000304"/>
    <property type="project" value="ParkinsonsUK-UCL"/>
</dbReference>
<dbReference type="GO" id="GO:1903898">
    <property type="term" value="P:negative regulation of PERK-mediated unfolded protein response"/>
    <property type="evidence" value="ECO:0000304"/>
    <property type="project" value="ParkinsonsUK-UCL"/>
</dbReference>
<dbReference type="GO" id="GO:1901798">
    <property type="term" value="P:positive regulation of signal transduction by p53 class mediator"/>
    <property type="evidence" value="ECO:0000250"/>
    <property type="project" value="ParkinsonsUK-UCL"/>
</dbReference>
<dbReference type="GO" id="GO:0032058">
    <property type="term" value="P:positive regulation of translational initiation in response to stress"/>
    <property type="evidence" value="ECO:0000314"/>
    <property type="project" value="ParkinsonsUK-UCL"/>
</dbReference>
<dbReference type="GO" id="GO:0070972">
    <property type="term" value="P:protein localization to endoplasmic reticulum"/>
    <property type="evidence" value="ECO:0000315"/>
    <property type="project" value="ParkinsonsUK-UCL"/>
</dbReference>
<dbReference type="GO" id="GO:0051726">
    <property type="term" value="P:regulation of cell cycle"/>
    <property type="evidence" value="ECO:0000304"/>
    <property type="project" value="ProtInc"/>
</dbReference>
<dbReference type="GO" id="GO:0036490">
    <property type="term" value="P:regulation of translation in response to endoplasmic reticulum stress"/>
    <property type="evidence" value="ECO:0000314"/>
    <property type="project" value="ParkinsonsUK-UCL"/>
</dbReference>
<dbReference type="GO" id="GO:0006446">
    <property type="term" value="P:regulation of translational initiation"/>
    <property type="evidence" value="ECO:0000314"/>
    <property type="project" value="ParkinsonsUK-UCL"/>
</dbReference>
<dbReference type="GO" id="GO:0043558">
    <property type="term" value="P:regulation of translational initiation in response to stress"/>
    <property type="evidence" value="ECO:0000314"/>
    <property type="project" value="ParkinsonsUK-UCL"/>
</dbReference>
<dbReference type="GO" id="GO:0034976">
    <property type="term" value="P:response to endoplasmic reticulum stress"/>
    <property type="evidence" value="ECO:0000314"/>
    <property type="project" value="ParkinsonsUK-UCL"/>
</dbReference>
<dbReference type="DisProt" id="DP01203"/>
<dbReference type="InterPro" id="IPR051254">
    <property type="entry name" value="PPP1R15"/>
</dbReference>
<dbReference type="InterPro" id="IPR019523">
    <property type="entry name" value="Prot_Pase1_reg-su15A/B_C"/>
</dbReference>
<dbReference type="PANTHER" id="PTHR16489">
    <property type="entry name" value="GH11727P"/>
    <property type="match status" value="1"/>
</dbReference>
<dbReference type="PANTHER" id="PTHR16489:SF14">
    <property type="entry name" value="PROTEIN PHOSPHATASE 1 REGULATORY SUBUNIT 15A"/>
    <property type="match status" value="1"/>
</dbReference>
<dbReference type="Pfam" id="PF10488">
    <property type="entry name" value="PP1c_bdg"/>
    <property type="match status" value="1"/>
</dbReference>
<comment type="function">
    <text evidence="5 8 10 12 17 19 21">Recruits the serine/threonine-protein phosphatase PPP1CA to prevents excessive phosphorylation of the translation initiation factor eIF-2A/EIF2S1, thereby reversing the shut-off of protein synthesis initiated by stress-inducible kinases and facilitating recovery of cells from stress (PubMed:26095357, PubMed:26742780). Down-regulates the TGF-beta signaling pathway by promoting dephosphorylation of TGFB1 by PP1 (PubMed:14718519). May promote apoptosis by inducing p53/TP53 phosphorylation on 'Ser-15' (PubMed:14635196). Plays an essential role in autophagy by tuning translation during starvation, thus enabling lysosomal biogenesis and a sustained autophagic flux (PubMed:32978159). Also acts a viral restriction factor by attenuating HIV-1 replication (PubMed:31778897). Mechanistically, mediates the inhibition of HIV-1 TAR RNA-mediated translation (PubMed:31778897).</text>
</comment>
<comment type="function">
    <text evidence="20">(Microbial infection) Promotes enterovirus 71 replication by mediating the internal ribosome entry site (IRES) activity of viral 5'-UTR.</text>
</comment>
<comment type="subunit">
    <text evidence="1 3 4 5 6 9 12 13 17 18">Interacts with PPP1CA (PubMed:15705855, PubMed:26095357). Interacts with EIF2S1 (PubMed:26095357). Interacts with PCNA (By similarity). Interacts with LYN and KMT2A/MLL1 (PubMed:11517336). Interacts with PPP1R1A and SMARCB1 (PubMed:12016208). Interacts with SMAD7 (PubMed:14718519). Interacts with BAG1 (PubMed:12724406). Interacts with NOX4 (PubMed:26742780).</text>
</comment>
<comment type="subunit">
    <text evidence="20">(Microbial infection) Interacts with enterovirus 71/EV71 non-structural protein precursor 3CD; this interaction promotes EV71 replication.</text>
</comment>
<comment type="interaction">
    <interactant intactId="EBI-714746">
        <id>O75807</id>
    </interactant>
    <interactant intactId="EBI-741533">
        <id>P56545</id>
        <label>CTBP2</label>
    </interactant>
    <organismsDiffer>false</organismsDiffer>
    <experiments>2</experiments>
</comment>
<comment type="interaction">
    <interactant intactId="EBI-714746">
        <id>O75807</id>
    </interactant>
    <interactant intactId="EBI-357253">
        <id>P62136</id>
        <label>PPP1CA</label>
    </interactant>
    <organismsDiffer>false</organismsDiffer>
    <experiments>12</experiments>
</comment>
<comment type="interaction">
    <interactant intactId="EBI-714746">
        <id>O75807</id>
    </interactant>
    <interactant intactId="EBI-1568511">
        <id>Q13522</id>
        <label>PPP1R1A</label>
    </interactant>
    <organismsDiffer>false</organismsDiffer>
    <experiments>4</experiments>
</comment>
<comment type="interaction">
    <interactant intactId="EBI-714746">
        <id>O75807</id>
    </interactant>
    <interactant intactId="EBI-372899">
        <id>Q13148</id>
        <label>TARDBP</label>
    </interactant>
    <organismsDiffer>false</organismsDiffer>
    <experiments>10</experiments>
</comment>
<comment type="subcellular location">
    <subcellularLocation>
        <location>Endoplasmic reticulum membrane</location>
        <topology>Peripheral membrane protein</topology>
        <orientation evidence="8 15 18">Cytoplasmic side</orientation>
    </subcellularLocation>
    <subcellularLocation>
        <location>Mitochondrion outer membrane</location>
        <topology>Peripheral membrane protein</topology>
        <orientation evidence="15">Cytoplasmic side</orientation>
    </subcellularLocation>
    <text evidence="15">Associates with membranes via an N-terminal amphipathic intramembrane region.</text>
</comment>
<comment type="alternative products">
    <event type="alternative splicing"/>
    <isoform>
        <id>O75807-1</id>
        <name>1</name>
        <sequence type="displayed"/>
    </isoform>
    <isoform>
        <id>O75807-2</id>
        <name>2</name>
        <sequence type="described" ref="VSP_057083 VSP_057084"/>
    </isoform>
</comment>
<comment type="induction">
    <text evidence="3 7 14 20 22">Specifically produced in response to stress: in absence of stress, some upstream open reading frame (uORF) of this transcript is translated, thereby preventing its translation (PubMed:19131336). By methyl methanesulfonate and ionizing irradiation (PubMed:9153226). By IL24/interleukin-24 in melanoma cells; which induces apoptosis (PubMed:10490642, PubMed:12114539). By viral infection including enterovirus 71/EV71 or HIV-1 (PubMed:31778897, PubMed:34985336).</text>
</comment>
<comment type="PTM">
    <text evidence="4 16">Phosphorylated at multiple Ser/Thr residues. Phosphorylated on tyrosine by LYN; which impairs its antiproliferative activity. Phosphorylation at Tyr-262 enhances proteasomal degradation, this position is dephosphorylated by PTPN2.</text>
</comment>
<comment type="PTM">
    <text evidence="16">Polyubiquitinated. Exhibits a rapid proteasomal degradation with a half-life under 1 hour, ubiquitination depends on endoplasmic reticulum association.</text>
</comment>
<comment type="miscellaneous">
    <text>The phosphatase activity of the PPP1R15A-PP1 complex toward EIF2S1 is specifically inhibited by Salubrinal, a drug that protects cells from endoplasmic reticulum stress.</text>
</comment>
<comment type="similarity">
    <text evidence="25">Belongs to the PPP1R15 family.</text>
</comment>
<protein>
    <recommendedName>
        <fullName>Protein phosphatase 1 regulatory subunit 15A</fullName>
    </recommendedName>
    <alternativeName>
        <fullName>Growth arrest and DNA damage-inducible protein GADD34</fullName>
    </alternativeName>
    <alternativeName>
        <fullName>Myeloid differentiation primary response protein MyD116 homolog</fullName>
    </alternativeName>
</protein>
<accession>O75807</accession>
<accession>B4DKQ3</accession>
<accession>Q6IA96</accession>
<accession>Q9NVU6</accession>
<organism>
    <name type="scientific">Homo sapiens</name>
    <name type="common">Human</name>
    <dbReference type="NCBI Taxonomy" id="9606"/>
    <lineage>
        <taxon>Eukaryota</taxon>
        <taxon>Metazoa</taxon>
        <taxon>Chordata</taxon>
        <taxon>Craniata</taxon>
        <taxon>Vertebrata</taxon>
        <taxon>Euteleostomi</taxon>
        <taxon>Mammalia</taxon>
        <taxon>Eutheria</taxon>
        <taxon>Euarchontoglires</taxon>
        <taxon>Primates</taxon>
        <taxon>Haplorrhini</taxon>
        <taxon>Catarrhini</taxon>
        <taxon>Hominidae</taxon>
        <taxon>Homo</taxon>
    </lineage>
</organism>
<feature type="chain" id="PRO_0000320518" description="Protein phosphatase 1 regulatory subunit 15A">
    <location>
        <begin position="1"/>
        <end position="674"/>
    </location>
</feature>
<feature type="topological domain" description="Cytoplasmic" evidence="26">
    <location>
        <begin position="1"/>
        <end position="21"/>
    </location>
</feature>
<feature type="intramembrane region" description="Helical" evidence="26">
    <location>
        <begin position="22"/>
        <end position="39"/>
    </location>
</feature>
<feature type="topological domain" description="Cytoplasmic" evidence="26">
    <location>
        <begin position="40"/>
        <end position="674"/>
    </location>
</feature>
<feature type="repeat" description="1">
    <location>
        <begin position="337"/>
        <end position="369"/>
    </location>
</feature>
<feature type="repeat" description="2">
    <location>
        <begin position="384"/>
        <end position="417"/>
    </location>
</feature>
<feature type="repeat" description="3">
    <location>
        <begin position="427"/>
        <end position="460"/>
    </location>
</feature>
<feature type="repeat" description="4">
    <location>
        <begin position="477"/>
        <end position="510"/>
    </location>
</feature>
<feature type="region of interest" description="Required for localization in the endoplasmic reticulum">
    <location>
        <begin position="1"/>
        <end position="60"/>
    </location>
</feature>
<feature type="region of interest" description="Disordered" evidence="2">
    <location>
        <begin position="65"/>
        <end position="504"/>
    </location>
</feature>
<feature type="region of interest" description="4 X 34 AA approximate repeats">
    <location>
        <begin position="337"/>
        <end position="510"/>
    </location>
</feature>
<feature type="region of interest" description="Interaction with SMAD7" evidence="12">
    <location>
        <begin position="337"/>
        <end position="510"/>
    </location>
</feature>
<feature type="region of interest" description="Interaction with KMT2A/MLL1">
    <location>
        <begin position="483"/>
        <end position="555"/>
    </location>
</feature>
<feature type="region of interest" description="Disordered" evidence="2">
    <location>
        <begin position="534"/>
        <end position="554"/>
    </location>
</feature>
<feature type="region of interest" description="Interaction with SMARCB1">
    <location>
        <begin position="536"/>
        <end position="583"/>
    </location>
</feature>
<feature type="region of interest" description="Disordered" evidence="2">
    <location>
        <begin position="625"/>
        <end position="674"/>
    </location>
</feature>
<feature type="compositionally biased region" description="Acidic residues" evidence="2">
    <location>
        <begin position="162"/>
        <end position="172"/>
    </location>
</feature>
<feature type="compositionally biased region" description="Polar residues" evidence="2">
    <location>
        <begin position="206"/>
        <end position="221"/>
    </location>
</feature>
<feature type="compositionally biased region" description="Basic and acidic residues" evidence="2">
    <location>
        <begin position="232"/>
        <end position="241"/>
    </location>
</feature>
<feature type="compositionally biased region" description="Polar residues" evidence="2">
    <location>
        <begin position="246"/>
        <end position="256"/>
    </location>
</feature>
<feature type="compositionally biased region" description="Basic and acidic residues" evidence="2">
    <location>
        <begin position="258"/>
        <end position="281"/>
    </location>
</feature>
<feature type="compositionally biased region" description="Low complexity" evidence="2">
    <location>
        <begin position="282"/>
        <end position="298"/>
    </location>
</feature>
<feature type="compositionally biased region" description="Acidic residues" evidence="2">
    <location>
        <begin position="348"/>
        <end position="373"/>
    </location>
</feature>
<feature type="compositionally biased region" description="Acidic residues" evidence="2">
    <location>
        <begin position="395"/>
        <end position="415"/>
    </location>
</feature>
<feature type="compositionally biased region" description="Low complexity" evidence="2">
    <location>
        <begin position="418"/>
        <end position="427"/>
    </location>
</feature>
<feature type="compositionally biased region" description="Acidic residues" evidence="2">
    <location>
        <begin position="439"/>
        <end position="458"/>
    </location>
</feature>
<feature type="compositionally biased region" description="Basic and acidic residues" evidence="2">
    <location>
        <begin position="466"/>
        <end position="477"/>
    </location>
</feature>
<feature type="compositionally biased region" description="Acidic residues" evidence="2">
    <location>
        <begin position="490"/>
        <end position="501"/>
    </location>
</feature>
<feature type="compositionally biased region" description="Basic and acidic residues" evidence="2">
    <location>
        <begin position="537"/>
        <end position="554"/>
    </location>
</feature>
<feature type="compositionally biased region" description="Low complexity" evidence="2">
    <location>
        <begin position="630"/>
        <end position="666"/>
    </location>
</feature>
<feature type="modified residue" description="Phosphoserine" evidence="28">
    <location>
        <position position="143"/>
    </location>
</feature>
<feature type="modified residue" description="Phosphotyrosine" evidence="16">
    <location>
        <position position="262"/>
    </location>
</feature>
<feature type="modified residue" description="Phosphotyrosine" evidence="16">
    <location>
        <position position="391"/>
    </location>
</feature>
<feature type="modified residue" description="Phosphotyrosine" evidence="16">
    <location>
        <position position="434"/>
    </location>
</feature>
<feature type="modified residue" description="Phosphotyrosine" evidence="16">
    <location>
        <position position="512"/>
    </location>
</feature>
<feature type="splice variant" id="VSP_057083" description="In isoform 2." evidence="24">
    <original>A</original>
    <variation>D</variation>
    <location>
        <position position="16"/>
    </location>
</feature>
<feature type="splice variant" id="VSP_057084" description="In isoform 2." evidence="24">
    <location>
        <begin position="17"/>
        <end position="175"/>
    </location>
</feature>
<feature type="sequence variant" id="VAR_039186" description="In dbSNP:rs564196.">
    <original>R</original>
    <variation>H</variation>
    <location>
        <position position="31"/>
    </location>
</feature>
<feature type="sequence variant" id="VAR_039187" description="In dbSNP:rs3786734." evidence="23">
    <original>A</original>
    <variation>T</variation>
    <location>
        <position position="32"/>
    </location>
</feature>
<feature type="sequence variant" id="VAR_039188" description="In dbSNP:rs611251.">
    <original>V</original>
    <variation>A</variation>
    <location>
        <position position="199"/>
    </location>
</feature>
<feature type="sequence variant" id="VAR_039189" description="In dbSNP:rs557806.">
    <original>R</original>
    <variation>P</variation>
    <location>
        <position position="251"/>
    </location>
</feature>
<feature type="sequence variant" id="VAR_039190" description="In dbSNP:rs610308." evidence="11">
    <original>K</original>
    <variation>E</variation>
    <location>
        <position position="277"/>
    </location>
</feature>
<feature type="sequence variant" id="VAR_062226" description="In dbSNP:rs11541192." evidence="11">
    <original>G</original>
    <variation>S</variation>
    <location>
        <position position="312"/>
    </location>
</feature>
<feature type="sequence variant" id="VAR_039191" description="In dbSNP:rs556052." evidence="11">
    <original>A</original>
    <variation>P</variation>
    <location>
        <position position="316"/>
    </location>
</feature>
<feature type="sequence variant" id="VAR_039192" description="In dbSNP:rs1050166.">
    <original>A</original>
    <variation>V</variation>
    <location>
        <position position="381"/>
    </location>
</feature>
<feature type="sequence variant" id="VAR_039193" description="In dbSNP:rs35087747." evidence="11">
    <original>R</original>
    <variation>S</variation>
    <location>
        <position position="476"/>
    </location>
</feature>
<feature type="sequence variant" id="VAR_039194" description="In dbSNP:rs2270946.">
    <original>R</original>
    <variation>C</variation>
    <location>
        <position position="594"/>
    </location>
</feature>
<feature type="sequence variant" id="VAR_039195" description="In dbSNP:rs500079." evidence="11">
    <original>T</original>
    <variation>A</variation>
    <location>
        <position position="597"/>
    </location>
</feature>
<feature type="mutagenesis site" description="Localizes to cytoplasm, degraded more slowly." evidence="15">
    <original>V</original>
    <variation>R</variation>
    <location>
        <position position="25"/>
    </location>
</feature>
<feature type="mutagenesis site" description="Localizes to cytoplasm." evidence="15">
    <original>L</original>
    <variation>R</variation>
    <location>
        <position position="29"/>
    </location>
</feature>
<feature type="mutagenesis site" description="Significantly reduced turnover." evidence="16">
    <original>Y</original>
    <variation>F</variation>
    <location>
        <position position="262"/>
    </location>
</feature>
<feature type="mutagenesis site" description="Reduces interaction with SMARCB1." evidence="6">
    <original>KVRF</original>
    <variation>AAAA</variation>
    <location>
        <begin position="555"/>
        <end position="558"/>
    </location>
</feature>
<feature type="mutagenesis site" description="Impairs PP1 activation." evidence="8">
    <original>VRF</original>
    <variation>ARA</variation>
    <location>
        <begin position="556"/>
        <end position="558"/>
    </location>
</feature>
<feature type="mutagenesis site" description="Reduces PP1-binding; when associated with K-614." evidence="8">
    <original>R</original>
    <variation>K</variation>
    <location>
        <position position="612"/>
    </location>
</feature>
<feature type="mutagenesis site" description="Reduces PP1-binding; when associated with K-612." evidence="8">
    <original>R</original>
    <variation>K</variation>
    <location>
        <position position="614"/>
    </location>
</feature>
<feature type="mutagenesis site" description="Reduces PP1-binding." evidence="8">
    <original>R</original>
    <variation>D</variation>
    <location>
        <position position="618"/>
    </location>
</feature>
<feature type="sequence conflict" description="In Ref. 3; BAA91649." evidence="25" ref="3">
    <original>E</original>
    <variation>G</variation>
    <location>
        <position position="80"/>
    </location>
</feature>
<feature type="sequence conflict" description="In Ref. 2; CAG33540." evidence="25" ref="2">
    <original>P</original>
    <variation>L</variation>
    <location>
        <position position="297"/>
    </location>
</feature>
<feature type="sequence conflict" description="In Ref. 3; BAG59265." evidence="25" ref="3">
    <original>L</original>
    <variation>P</variation>
    <location>
        <position position="669"/>
    </location>
</feature>
<feature type="helix" evidence="31">
    <location>
        <begin position="427"/>
        <end position="432"/>
    </location>
</feature>
<feature type="strand" evidence="29">
    <location>
        <begin position="563"/>
        <end position="565"/>
    </location>
</feature>
<feature type="helix" evidence="30">
    <location>
        <begin position="583"/>
        <end position="602"/>
    </location>
</feature>
<feature type="helix" evidence="30">
    <location>
        <begin position="604"/>
        <end position="606"/>
    </location>
</feature>
<feature type="helix" evidence="30">
    <location>
        <begin position="609"/>
        <end position="618"/>
    </location>
</feature>
<proteinExistence type="evidence at protein level"/>
<evidence type="ECO:0000250" key="1"/>
<evidence type="ECO:0000256" key="2">
    <source>
        <dbReference type="SAM" id="MobiDB-lite"/>
    </source>
</evidence>
<evidence type="ECO:0000269" key="3">
    <source>
    </source>
</evidence>
<evidence type="ECO:0000269" key="4">
    <source>
    </source>
</evidence>
<evidence type="ECO:0000269" key="5">
    <source>
    </source>
</evidence>
<evidence type="ECO:0000269" key="6">
    <source>
    </source>
</evidence>
<evidence type="ECO:0000269" key="7">
    <source>
    </source>
</evidence>
<evidence type="ECO:0000269" key="8">
    <source>
    </source>
</evidence>
<evidence type="ECO:0000269" key="9">
    <source>
    </source>
</evidence>
<evidence type="ECO:0000269" key="10">
    <source>
    </source>
</evidence>
<evidence type="ECO:0000269" key="11">
    <source>
    </source>
</evidence>
<evidence type="ECO:0000269" key="12">
    <source>
    </source>
</evidence>
<evidence type="ECO:0000269" key="13">
    <source>
    </source>
</evidence>
<evidence type="ECO:0000269" key="14">
    <source>
    </source>
</evidence>
<evidence type="ECO:0000269" key="15">
    <source>
    </source>
</evidence>
<evidence type="ECO:0000269" key="16">
    <source>
    </source>
</evidence>
<evidence type="ECO:0000269" key="17">
    <source>
    </source>
</evidence>
<evidence type="ECO:0000269" key="18">
    <source>
    </source>
</evidence>
<evidence type="ECO:0000269" key="19">
    <source>
    </source>
</evidence>
<evidence type="ECO:0000269" key="20">
    <source>
    </source>
</evidence>
<evidence type="ECO:0000269" key="21">
    <source>
    </source>
</evidence>
<evidence type="ECO:0000269" key="22">
    <source>
    </source>
</evidence>
<evidence type="ECO:0000269" key="23">
    <source ref="2"/>
</evidence>
<evidence type="ECO:0000303" key="24">
    <source>
    </source>
</evidence>
<evidence type="ECO:0000305" key="25"/>
<evidence type="ECO:0000305" key="26">
    <source>
    </source>
</evidence>
<evidence type="ECO:0007744" key="27">
    <source>
        <dbReference type="PDB" id="4XPN"/>
    </source>
</evidence>
<evidence type="ECO:0007744" key="28">
    <source>
    </source>
</evidence>
<evidence type="ECO:0007829" key="29">
    <source>
        <dbReference type="PDB" id="4XPN"/>
    </source>
</evidence>
<evidence type="ECO:0007829" key="30">
    <source>
        <dbReference type="PDB" id="7NXV"/>
    </source>
</evidence>
<evidence type="ECO:0007829" key="31">
    <source>
        <dbReference type="PDB" id="8QZZ"/>
    </source>
</evidence>